<evidence type="ECO:0000255" key="1">
    <source>
        <dbReference type="HAMAP-Rule" id="MF_00171"/>
    </source>
</evidence>
<organism>
    <name type="scientific">Azorhizobium caulinodans (strain ATCC 43989 / DSM 5975 / JCM 20966 / LMG 6465 / NBRC 14845 / NCIMB 13405 / ORS 571)</name>
    <dbReference type="NCBI Taxonomy" id="438753"/>
    <lineage>
        <taxon>Bacteria</taxon>
        <taxon>Pseudomonadati</taxon>
        <taxon>Pseudomonadota</taxon>
        <taxon>Alphaproteobacteria</taxon>
        <taxon>Hyphomicrobiales</taxon>
        <taxon>Xanthobacteraceae</taxon>
        <taxon>Azorhizobium</taxon>
    </lineage>
</organism>
<dbReference type="EC" id="5.4.99.12" evidence="1"/>
<dbReference type="EMBL" id="AP009384">
    <property type="protein sequence ID" value="BAF86794.1"/>
    <property type="molecule type" value="Genomic_DNA"/>
</dbReference>
<dbReference type="RefSeq" id="WP_012169327.1">
    <property type="nucleotide sequence ID" value="NC_009937.1"/>
</dbReference>
<dbReference type="SMR" id="A8IQL3"/>
<dbReference type="STRING" id="438753.AZC_0796"/>
<dbReference type="KEGG" id="azc:AZC_0796"/>
<dbReference type="eggNOG" id="COG0101">
    <property type="taxonomic scope" value="Bacteria"/>
</dbReference>
<dbReference type="HOGENOM" id="CLU_014673_0_2_5"/>
<dbReference type="Proteomes" id="UP000000270">
    <property type="component" value="Chromosome"/>
</dbReference>
<dbReference type="GO" id="GO:0003723">
    <property type="term" value="F:RNA binding"/>
    <property type="evidence" value="ECO:0007669"/>
    <property type="project" value="InterPro"/>
</dbReference>
<dbReference type="GO" id="GO:0160147">
    <property type="term" value="F:tRNA pseudouridine(38-40) synthase activity"/>
    <property type="evidence" value="ECO:0007669"/>
    <property type="project" value="UniProtKB-EC"/>
</dbReference>
<dbReference type="GO" id="GO:0031119">
    <property type="term" value="P:tRNA pseudouridine synthesis"/>
    <property type="evidence" value="ECO:0007669"/>
    <property type="project" value="UniProtKB-UniRule"/>
</dbReference>
<dbReference type="CDD" id="cd02570">
    <property type="entry name" value="PseudoU_synth_EcTruA"/>
    <property type="match status" value="1"/>
</dbReference>
<dbReference type="FunFam" id="3.30.70.580:FF:000001">
    <property type="entry name" value="tRNA pseudouridine synthase A"/>
    <property type="match status" value="1"/>
</dbReference>
<dbReference type="Gene3D" id="3.30.70.660">
    <property type="entry name" value="Pseudouridine synthase I, catalytic domain, C-terminal subdomain"/>
    <property type="match status" value="1"/>
</dbReference>
<dbReference type="Gene3D" id="3.30.70.580">
    <property type="entry name" value="Pseudouridine synthase I, catalytic domain, N-terminal subdomain"/>
    <property type="match status" value="1"/>
</dbReference>
<dbReference type="HAMAP" id="MF_00171">
    <property type="entry name" value="TruA"/>
    <property type="match status" value="1"/>
</dbReference>
<dbReference type="InterPro" id="IPR020103">
    <property type="entry name" value="PsdUridine_synth_cat_dom_sf"/>
</dbReference>
<dbReference type="InterPro" id="IPR001406">
    <property type="entry name" value="PsdUridine_synth_TruA"/>
</dbReference>
<dbReference type="InterPro" id="IPR020097">
    <property type="entry name" value="PsdUridine_synth_TruA_a/b_dom"/>
</dbReference>
<dbReference type="InterPro" id="IPR020095">
    <property type="entry name" value="PsdUridine_synth_TruA_C"/>
</dbReference>
<dbReference type="InterPro" id="IPR020094">
    <property type="entry name" value="TruA/RsuA/RluB/E/F_N"/>
</dbReference>
<dbReference type="NCBIfam" id="TIGR00071">
    <property type="entry name" value="hisT_truA"/>
    <property type="match status" value="1"/>
</dbReference>
<dbReference type="PANTHER" id="PTHR11142">
    <property type="entry name" value="PSEUDOURIDYLATE SYNTHASE"/>
    <property type="match status" value="1"/>
</dbReference>
<dbReference type="PANTHER" id="PTHR11142:SF0">
    <property type="entry name" value="TRNA PSEUDOURIDINE SYNTHASE-LIKE 1"/>
    <property type="match status" value="1"/>
</dbReference>
<dbReference type="Pfam" id="PF01416">
    <property type="entry name" value="PseudoU_synth_1"/>
    <property type="match status" value="2"/>
</dbReference>
<dbReference type="PIRSF" id="PIRSF001430">
    <property type="entry name" value="tRNA_psdUrid_synth"/>
    <property type="match status" value="1"/>
</dbReference>
<dbReference type="SUPFAM" id="SSF55120">
    <property type="entry name" value="Pseudouridine synthase"/>
    <property type="match status" value="1"/>
</dbReference>
<protein>
    <recommendedName>
        <fullName evidence="1">tRNA pseudouridine synthase A</fullName>
        <ecNumber evidence="1">5.4.99.12</ecNumber>
    </recommendedName>
    <alternativeName>
        <fullName evidence="1">tRNA pseudouridine(38-40) synthase</fullName>
    </alternativeName>
    <alternativeName>
        <fullName evidence="1">tRNA pseudouridylate synthase I</fullName>
    </alternativeName>
    <alternativeName>
        <fullName evidence="1">tRNA-uridine isomerase I</fullName>
    </alternativeName>
</protein>
<reference key="1">
    <citation type="submission" date="2007-04" db="EMBL/GenBank/DDBJ databases">
        <title>Complete genome sequence of the nitrogen-fixing bacterium Azorhizobium caulinodans ORS571.</title>
        <authorList>
            <person name="Lee K.B."/>
            <person name="Backer P.D."/>
            <person name="Aono T."/>
            <person name="Liu C.T."/>
            <person name="Suzuki S."/>
            <person name="Suzuki T."/>
            <person name="Kaneko T."/>
            <person name="Yamada M."/>
            <person name="Tabata S."/>
            <person name="Kupfer D.M."/>
            <person name="Najar F.Z."/>
            <person name="Wiley G.B."/>
            <person name="Roe B."/>
            <person name="Binnewies T."/>
            <person name="Ussery D."/>
            <person name="Vereecke D."/>
            <person name="Gevers D."/>
            <person name="Holsters M."/>
            <person name="Oyaizu H."/>
        </authorList>
    </citation>
    <scope>NUCLEOTIDE SEQUENCE [LARGE SCALE GENOMIC DNA]</scope>
    <source>
        <strain>ATCC 43989 / DSM 5975 / JCM 20966 / LMG 6465 / NBRC 14845 / NCIMB 13405 / ORS 571</strain>
    </source>
</reference>
<name>TRUA_AZOC5</name>
<proteinExistence type="inferred from homology"/>
<gene>
    <name evidence="1" type="primary">truA</name>
    <name type="ordered locus">AZC_0796</name>
</gene>
<feature type="chain" id="PRO_1000071590" description="tRNA pseudouridine synthase A">
    <location>
        <begin position="1"/>
        <end position="258"/>
    </location>
</feature>
<feature type="active site" description="Nucleophile" evidence="1">
    <location>
        <position position="52"/>
    </location>
</feature>
<feature type="binding site" evidence="1">
    <location>
        <position position="111"/>
    </location>
    <ligand>
        <name>substrate</name>
    </ligand>
</feature>
<accession>A8IQL3</accession>
<keyword id="KW-0413">Isomerase</keyword>
<keyword id="KW-1185">Reference proteome</keyword>
<keyword id="KW-0819">tRNA processing</keyword>
<sequence>MPRYKLTIEYDGTPFAGWQIQAELPTVQGVLAAAVKGFSGEEAHVAGAGRTDAGVHATGQVAHIHLARDWRPDQVRDAMTAHLRPHPVAVVAVERVADDFDARFSAVKRHYLYRIVNRRPDLALDRDRAWRVPQKLDASAMHVAAQRLLGKHDFTTFRAAECQAASPEKTLDQLDVMRSGDDIRIVTSARSFLHHQVRSMVGSLIRVGEGRWSADDLADALAARDRRRCGPMAPACGLYLAAVSYPEQIVETGAPDRI</sequence>
<comment type="function">
    <text evidence="1">Formation of pseudouridine at positions 38, 39 and 40 in the anticodon stem and loop of transfer RNAs.</text>
</comment>
<comment type="catalytic activity">
    <reaction evidence="1">
        <text>uridine(38/39/40) in tRNA = pseudouridine(38/39/40) in tRNA</text>
        <dbReference type="Rhea" id="RHEA:22376"/>
        <dbReference type="Rhea" id="RHEA-COMP:10085"/>
        <dbReference type="Rhea" id="RHEA-COMP:10087"/>
        <dbReference type="ChEBI" id="CHEBI:65314"/>
        <dbReference type="ChEBI" id="CHEBI:65315"/>
        <dbReference type="EC" id="5.4.99.12"/>
    </reaction>
</comment>
<comment type="subunit">
    <text evidence="1">Homodimer.</text>
</comment>
<comment type="similarity">
    <text evidence="1">Belongs to the tRNA pseudouridine synthase TruA family.</text>
</comment>